<proteinExistence type="inferred from homology"/>
<keyword id="KW-0414">Isoprene biosynthesis</keyword>
<keyword id="KW-0460">Magnesium</keyword>
<keyword id="KW-0479">Metal-binding</keyword>
<keyword id="KW-1185">Reference proteome</keyword>
<keyword id="KW-0784">Thiamine biosynthesis</keyword>
<keyword id="KW-0786">Thiamine pyrophosphate</keyword>
<keyword id="KW-0808">Transferase</keyword>
<reference key="1">
    <citation type="journal article" date="2006" name="Nat. Biotechnol.">
        <title>Genome sequence of the bioplastic-producing 'Knallgas' bacterium Ralstonia eutropha H16.</title>
        <authorList>
            <person name="Pohlmann A."/>
            <person name="Fricke W.F."/>
            <person name="Reinecke F."/>
            <person name="Kusian B."/>
            <person name="Liesegang H."/>
            <person name="Cramm R."/>
            <person name="Eitinger T."/>
            <person name="Ewering C."/>
            <person name="Poetter M."/>
            <person name="Schwartz E."/>
            <person name="Strittmatter A."/>
            <person name="Voss I."/>
            <person name="Gottschalk G."/>
            <person name="Steinbuechel A."/>
            <person name="Friedrich B."/>
            <person name="Bowien B."/>
        </authorList>
    </citation>
    <scope>NUCLEOTIDE SEQUENCE [LARGE SCALE GENOMIC DNA]</scope>
    <source>
        <strain>ATCC 17699 / DSM 428 / KCTC 22496 / NCIMB 10442 / H16 / Stanier 337</strain>
    </source>
</reference>
<comment type="function">
    <text evidence="1">Catalyzes the acyloin condensation reaction between C atoms 2 and 3 of pyruvate and glyceraldehyde 3-phosphate to yield 1-deoxy-D-xylulose-5-phosphate (DXP).</text>
</comment>
<comment type="catalytic activity">
    <reaction evidence="1">
        <text>D-glyceraldehyde 3-phosphate + pyruvate + H(+) = 1-deoxy-D-xylulose 5-phosphate + CO2</text>
        <dbReference type="Rhea" id="RHEA:12605"/>
        <dbReference type="ChEBI" id="CHEBI:15361"/>
        <dbReference type="ChEBI" id="CHEBI:15378"/>
        <dbReference type="ChEBI" id="CHEBI:16526"/>
        <dbReference type="ChEBI" id="CHEBI:57792"/>
        <dbReference type="ChEBI" id="CHEBI:59776"/>
        <dbReference type="EC" id="2.2.1.7"/>
    </reaction>
</comment>
<comment type="cofactor">
    <cofactor evidence="1">
        <name>Mg(2+)</name>
        <dbReference type="ChEBI" id="CHEBI:18420"/>
    </cofactor>
    <text evidence="1">Binds 1 Mg(2+) ion per subunit.</text>
</comment>
<comment type="cofactor">
    <cofactor evidence="1">
        <name>thiamine diphosphate</name>
        <dbReference type="ChEBI" id="CHEBI:58937"/>
    </cofactor>
    <text evidence="1">Binds 1 thiamine pyrophosphate per subunit.</text>
</comment>
<comment type="pathway">
    <text evidence="1">Metabolic intermediate biosynthesis; 1-deoxy-D-xylulose 5-phosphate biosynthesis; 1-deoxy-D-xylulose 5-phosphate from D-glyceraldehyde 3-phosphate and pyruvate: step 1/1.</text>
</comment>
<comment type="subunit">
    <text evidence="1">Homodimer.</text>
</comment>
<comment type="similarity">
    <text evidence="1">Belongs to the transketolase family. DXPS subfamily.</text>
</comment>
<organism>
    <name type="scientific">Cupriavidus necator (strain ATCC 17699 / DSM 428 / KCTC 22496 / NCIMB 10442 / H16 / Stanier 337)</name>
    <name type="common">Ralstonia eutropha</name>
    <dbReference type="NCBI Taxonomy" id="381666"/>
    <lineage>
        <taxon>Bacteria</taxon>
        <taxon>Pseudomonadati</taxon>
        <taxon>Pseudomonadota</taxon>
        <taxon>Betaproteobacteria</taxon>
        <taxon>Burkholderiales</taxon>
        <taxon>Burkholderiaceae</taxon>
        <taxon>Cupriavidus</taxon>
    </lineage>
</organism>
<dbReference type="EC" id="2.2.1.7" evidence="1"/>
<dbReference type="EMBL" id="AM260479">
    <property type="protein sequence ID" value="CAJ93811.1"/>
    <property type="molecule type" value="Genomic_DNA"/>
</dbReference>
<dbReference type="RefSeq" id="WP_010813641.1">
    <property type="nucleotide sequence ID" value="NZ_CP039287.1"/>
</dbReference>
<dbReference type="SMR" id="Q0K860"/>
<dbReference type="STRING" id="381666.H16_A2732"/>
<dbReference type="KEGG" id="reh:H16_A2732"/>
<dbReference type="eggNOG" id="COG1154">
    <property type="taxonomic scope" value="Bacteria"/>
</dbReference>
<dbReference type="HOGENOM" id="CLU_009227_1_4_4"/>
<dbReference type="OrthoDB" id="9803371at2"/>
<dbReference type="UniPathway" id="UPA00064">
    <property type="reaction ID" value="UER00091"/>
</dbReference>
<dbReference type="Proteomes" id="UP000008210">
    <property type="component" value="Chromosome 1"/>
</dbReference>
<dbReference type="GO" id="GO:0005829">
    <property type="term" value="C:cytosol"/>
    <property type="evidence" value="ECO:0007669"/>
    <property type="project" value="TreeGrafter"/>
</dbReference>
<dbReference type="GO" id="GO:0008661">
    <property type="term" value="F:1-deoxy-D-xylulose-5-phosphate synthase activity"/>
    <property type="evidence" value="ECO:0007669"/>
    <property type="project" value="UniProtKB-UniRule"/>
</dbReference>
<dbReference type="GO" id="GO:0000287">
    <property type="term" value="F:magnesium ion binding"/>
    <property type="evidence" value="ECO:0007669"/>
    <property type="project" value="UniProtKB-UniRule"/>
</dbReference>
<dbReference type="GO" id="GO:0030976">
    <property type="term" value="F:thiamine pyrophosphate binding"/>
    <property type="evidence" value="ECO:0007669"/>
    <property type="project" value="UniProtKB-UniRule"/>
</dbReference>
<dbReference type="GO" id="GO:0052865">
    <property type="term" value="P:1-deoxy-D-xylulose 5-phosphate biosynthetic process"/>
    <property type="evidence" value="ECO:0007669"/>
    <property type="project" value="UniProtKB-UniPathway"/>
</dbReference>
<dbReference type="GO" id="GO:0019288">
    <property type="term" value="P:isopentenyl diphosphate biosynthetic process, methylerythritol 4-phosphate pathway"/>
    <property type="evidence" value="ECO:0007669"/>
    <property type="project" value="TreeGrafter"/>
</dbReference>
<dbReference type="GO" id="GO:0016114">
    <property type="term" value="P:terpenoid biosynthetic process"/>
    <property type="evidence" value="ECO:0007669"/>
    <property type="project" value="UniProtKB-UniRule"/>
</dbReference>
<dbReference type="GO" id="GO:0009228">
    <property type="term" value="P:thiamine biosynthetic process"/>
    <property type="evidence" value="ECO:0007669"/>
    <property type="project" value="UniProtKB-UniRule"/>
</dbReference>
<dbReference type="CDD" id="cd02007">
    <property type="entry name" value="TPP_DXS"/>
    <property type="match status" value="1"/>
</dbReference>
<dbReference type="CDD" id="cd07033">
    <property type="entry name" value="TPP_PYR_DXS_TK_like"/>
    <property type="match status" value="1"/>
</dbReference>
<dbReference type="FunFam" id="3.40.50.920:FF:000002">
    <property type="entry name" value="1-deoxy-D-xylulose-5-phosphate synthase"/>
    <property type="match status" value="1"/>
</dbReference>
<dbReference type="FunFam" id="3.40.50.970:FF:000005">
    <property type="entry name" value="1-deoxy-D-xylulose-5-phosphate synthase"/>
    <property type="match status" value="1"/>
</dbReference>
<dbReference type="Gene3D" id="3.40.50.920">
    <property type="match status" value="1"/>
</dbReference>
<dbReference type="Gene3D" id="3.40.50.970">
    <property type="match status" value="2"/>
</dbReference>
<dbReference type="HAMAP" id="MF_00315">
    <property type="entry name" value="DXP_synth"/>
    <property type="match status" value="1"/>
</dbReference>
<dbReference type="InterPro" id="IPR005477">
    <property type="entry name" value="Dxylulose-5-P_synthase"/>
</dbReference>
<dbReference type="InterPro" id="IPR029061">
    <property type="entry name" value="THDP-binding"/>
</dbReference>
<dbReference type="InterPro" id="IPR009014">
    <property type="entry name" value="Transketo_C/PFOR_II"/>
</dbReference>
<dbReference type="InterPro" id="IPR005475">
    <property type="entry name" value="Transketolase-like_Pyr-bd"/>
</dbReference>
<dbReference type="InterPro" id="IPR020826">
    <property type="entry name" value="Transketolase_BS"/>
</dbReference>
<dbReference type="InterPro" id="IPR033248">
    <property type="entry name" value="Transketolase_C"/>
</dbReference>
<dbReference type="InterPro" id="IPR049557">
    <property type="entry name" value="Transketolase_CS"/>
</dbReference>
<dbReference type="NCBIfam" id="TIGR00204">
    <property type="entry name" value="dxs"/>
    <property type="match status" value="1"/>
</dbReference>
<dbReference type="NCBIfam" id="NF003933">
    <property type="entry name" value="PRK05444.2-2"/>
    <property type="match status" value="1"/>
</dbReference>
<dbReference type="PANTHER" id="PTHR43322">
    <property type="entry name" value="1-D-DEOXYXYLULOSE 5-PHOSPHATE SYNTHASE-RELATED"/>
    <property type="match status" value="1"/>
</dbReference>
<dbReference type="PANTHER" id="PTHR43322:SF5">
    <property type="entry name" value="1-DEOXY-D-XYLULOSE-5-PHOSPHATE SYNTHASE, CHLOROPLASTIC"/>
    <property type="match status" value="1"/>
</dbReference>
<dbReference type="Pfam" id="PF13292">
    <property type="entry name" value="DXP_synthase_N"/>
    <property type="match status" value="1"/>
</dbReference>
<dbReference type="Pfam" id="PF02779">
    <property type="entry name" value="Transket_pyr"/>
    <property type="match status" value="1"/>
</dbReference>
<dbReference type="Pfam" id="PF02780">
    <property type="entry name" value="Transketolase_C"/>
    <property type="match status" value="1"/>
</dbReference>
<dbReference type="SMART" id="SM00861">
    <property type="entry name" value="Transket_pyr"/>
    <property type="match status" value="1"/>
</dbReference>
<dbReference type="SUPFAM" id="SSF52518">
    <property type="entry name" value="Thiamin diphosphate-binding fold (THDP-binding)"/>
    <property type="match status" value="2"/>
</dbReference>
<dbReference type="SUPFAM" id="SSF52922">
    <property type="entry name" value="TK C-terminal domain-like"/>
    <property type="match status" value="1"/>
</dbReference>
<dbReference type="PROSITE" id="PS00801">
    <property type="entry name" value="TRANSKETOLASE_1"/>
    <property type="match status" value="1"/>
</dbReference>
<dbReference type="PROSITE" id="PS00802">
    <property type="entry name" value="TRANSKETOLASE_2"/>
    <property type="match status" value="1"/>
</dbReference>
<protein>
    <recommendedName>
        <fullName evidence="1">1-deoxy-D-xylulose-5-phosphate synthase</fullName>
        <ecNumber evidence="1">2.2.1.7</ecNumber>
    </recommendedName>
    <alternativeName>
        <fullName evidence="1">1-deoxyxylulose-5-phosphate synthase</fullName>
        <shortName evidence="1">DXP synthase</shortName>
        <shortName evidence="1">DXPS</shortName>
    </alternativeName>
</protein>
<feature type="chain" id="PRO_1000019068" description="1-deoxy-D-xylulose-5-phosphate synthase">
    <location>
        <begin position="1"/>
        <end position="638"/>
    </location>
</feature>
<feature type="binding site" evidence="1">
    <location>
        <position position="75"/>
    </location>
    <ligand>
        <name>thiamine diphosphate</name>
        <dbReference type="ChEBI" id="CHEBI:58937"/>
    </ligand>
</feature>
<feature type="binding site" evidence="1">
    <location>
        <begin position="116"/>
        <end position="118"/>
    </location>
    <ligand>
        <name>thiamine diphosphate</name>
        <dbReference type="ChEBI" id="CHEBI:58937"/>
    </ligand>
</feature>
<feature type="binding site" evidence="1">
    <location>
        <position position="147"/>
    </location>
    <ligand>
        <name>Mg(2+)</name>
        <dbReference type="ChEBI" id="CHEBI:18420"/>
    </ligand>
</feature>
<feature type="binding site" evidence="1">
    <location>
        <begin position="148"/>
        <end position="149"/>
    </location>
    <ligand>
        <name>thiamine diphosphate</name>
        <dbReference type="ChEBI" id="CHEBI:58937"/>
    </ligand>
</feature>
<feature type="binding site" evidence="1">
    <location>
        <position position="177"/>
    </location>
    <ligand>
        <name>Mg(2+)</name>
        <dbReference type="ChEBI" id="CHEBI:18420"/>
    </ligand>
</feature>
<feature type="binding site" evidence="1">
    <location>
        <position position="177"/>
    </location>
    <ligand>
        <name>thiamine diphosphate</name>
        <dbReference type="ChEBI" id="CHEBI:58937"/>
    </ligand>
</feature>
<feature type="binding site" evidence="1">
    <location>
        <position position="288"/>
    </location>
    <ligand>
        <name>thiamine diphosphate</name>
        <dbReference type="ChEBI" id="CHEBI:58937"/>
    </ligand>
</feature>
<feature type="binding site" evidence="1">
    <location>
        <position position="370"/>
    </location>
    <ligand>
        <name>thiamine diphosphate</name>
        <dbReference type="ChEBI" id="CHEBI:58937"/>
    </ligand>
</feature>
<evidence type="ECO:0000255" key="1">
    <source>
        <dbReference type="HAMAP-Rule" id="MF_00315"/>
    </source>
</evidence>
<accession>Q0K860</accession>
<sequence>MTYALLNKIDAPADLRKLDRRELRTLADELRAYVLESVSQTGGHLSSNLGTVELTIALHYVFNTPDDRLVWDVGHQSYPHKILTGRRERMGTLRQWGGISGFPRRSESEYDTFGTAHSSTSISAALGMALGARTLGEKRVSVAVIGDGAMTAGMAFEALNNAGVYKDLPLVVVLNDNDMSISPPVGALNRHLARLLSGQFYAATKKGIEKVLSVAPPVLEFAKRFEEHAKGMMVPATLFEEFGFNYIGPIDGHDLNSLVPTLQNIRERALEGAGPQFLHVVTKKGQGYKLAEADPILYHGPGKFNPAEGIRPAAKPARKTYTQVFGDWLCDMAAADKRLVGITPAMREGSGMVEFERRFPDRYYDVGIAEQHAVTFAGGLACEGLKPVVAIYSTFLQRGYDQLIHDVALQNLPVVFALDRAGLVGADGATHAGAYDIAYLRCIPNMMVMTPSDENECRQLLTTAFHQACPSAVRYPRGSGPGAAIAAELTTVPVGKGVMRREGGARAGHRVGFLAFGSMVHPALGAAEALDAAVADMRFVKPLDVELVKRLAAENDYLVTVEEGSVMGGAGSAVLEALAEAGIDKPVLTLGLPDRFVDHGDPAYLLQQCGLDAAGIERSVRERFGLDQPKVTVASRVA</sequence>
<gene>
    <name evidence="1" type="primary">dxs</name>
    <name type="ordered locus">H16_A2732</name>
</gene>
<name>DXS_CUPNH</name>